<gene>
    <name type="primary">rhiE</name>
    <name type="ordered locus">Dda3937_01465</name>
</gene>
<keyword id="KW-0903">Direct protein sequencing</keyword>
<keyword id="KW-0456">Lyase</keyword>
<keyword id="KW-1185">Reference proteome</keyword>
<keyword id="KW-0964">Secreted</keyword>
<keyword id="KW-0732">Signal</keyword>
<keyword id="KW-0843">Virulence</keyword>
<sequence length="578" mass="64978">MHMNKPLQAWRTPLLTLIFVLPLTATGAVKLTLDGMNSTLDNGLLKVRFGADGSAKEVWKGGTNLISRLSGAARDPDKNRSFYLDYYSGGVNEFVPERLEVIKQTPDQVHLAYIDDQNGKLRLEYHLIMTRDVSGLYSYVVAANTGSAPVTVSELRNVYRFDATRLDTLFNSIRRGTPLLYDELEQLPKVQDETWRLPDGSVYSKYDFAGYQRESRYWGVMGNGYGAWMVPASGEYYSGDALKQELLVHQDAIILNYLTGSHFGTPDMVAQPGFEKLYGPWLLYINQGNDRELVADVSRRAEHERASWPYRWLDDARYPRQRATVSGRLRTEAPHATVVLNSSAENFDIQTTGYLFSARTNRDGRFSLSNVPPGEYRLSAYADGGTQIGLLAQQTVRVEGKKTRLGQIDARQPAPLAWAIGQADRRADEFRFGDKPRQYRWQTEVPADLTFEIGKSRERKDWYYAQTQPGSWHILFNTRTPEQPYTLNIAIAAASNNGMTTPASSPQLAVKLNGQLLTTLKYDNDKSIYRGAMQSGRYHEAHIPLPAGALQQGGNRITLELLGGMVMYDAITLTETPQ</sequence>
<accession>Q8RJP2</accession>
<accession>E0SBN8</accession>
<proteinExistence type="evidence at protein level"/>
<reference key="1">
    <citation type="journal article" date="2003" name="J. Bacteriol.">
        <title>Rhamnogalacturonate lyase RhiE is secreted by the out system in Erwinia chrysanthemi.</title>
        <authorList>
            <person name="Laatu M."/>
            <person name="Condemine G."/>
        </authorList>
    </citation>
    <scope>NUCLEOTIDE SEQUENCE [GENOMIC DNA]</scope>
    <scope>PROTEIN SEQUENCE OF N-TERMINUS</scope>
    <scope>CHARACTERIZATION</scope>
    <source>
        <strain>3937</strain>
    </source>
</reference>
<reference key="2">
    <citation type="journal article" date="2011" name="J. Bacteriol.">
        <title>Genome sequence of the plant-pathogenic bacterium Dickeya dadantii 3937.</title>
        <authorList>
            <person name="Glasner J.D."/>
            <person name="Yang C.H."/>
            <person name="Reverchon S."/>
            <person name="Hugouvieux-Cotte-Pattat N."/>
            <person name="Condemine G."/>
            <person name="Bohin J.P."/>
            <person name="Van Gijsegem F."/>
            <person name="Yang S."/>
            <person name="Franza T."/>
            <person name="Expert D."/>
            <person name="Plunkett G. III"/>
            <person name="San Francisco M.J."/>
            <person name="Charkowski A.O."/>
            <person name="Py B."/>
            <person name="Bell K."/>
            <person name="Rauscher L."/>
            <person name="Rodriguez-Palenzuela P."/>
            <person name="Toussaint A."/>
            <person name="Holeva M.C."/>
            <person name="He S.Y."/>
            <person name="Douet V."/>
            <person name="Boccara M."/>
            <person name="Blanco C."/>
            <person name="Toth I."/>
            <person name="Anderson B.D."/>
            <person name="Biehl B.S."/>
            <person name="Mau B."/>
            <person name="Flynn S.M."/>
            <person name="Barras F."/>
            <person name="Lindeberg M."/>
            <person name="Birch P.R."/>
            <person name="Tsuyumu S."/>
            <person name="Shi X."/>
            <person name="Hibbing M."/>
            <person name="Yap M.N."/>
            <person name="Carpentier M."/>
            <person name="Dassa E."/>
            <person name="Umehara M."/>
            <person name="Kim J.F."/>
            <person name="Rusch M."/>
            <person name="Soni P."/>
            <person name="Mayhew G.F."/>
            <person name="Fouts D.E."/>
            <person name="Gill S.R."/>
            <person name="Blattner F.R."/>
            <person name="Keen N.T."/>
            <person name="Perna N.T."/>
        </authorList>
    </citation>
    <scope>NUCLEOTIDE SEQUENCE [LARGE SCALE GENOMIC DNA]</scope>
    <source>
        <strain>3937</strain>
    </source>
</reference>
<evidence type="ECO:0000269" key="1">
    <source>
    </source>
</evidence>
<evidence type="ECO:0000305" key="2"/>
<organism>
    <name type="scientific">Dickeya dadantii (strain 3937)</name>
    <name type="common">Erwinia chrysanthemi (strain 3937)</name>
    <dbReference type="NCBI Taxonomy" id="198628"/>
    <lineage>
        <taxon>Bacteria</taxon>
        <taxon>Pseudomonadati</taxon>
        <taxon>Pseudomonadota</taxon>
        <taxon>Gammaproteobacteria</taxon>
        <taxon>Enterobacterales</taxon>
        <taxon>Pectobacteriaceae</taxon>
        <taxon>Dickeya</taxon>
    </lineage>
</organism>
<dbReference type="EC" id="4.2.2.23"/>
<dbReference type="EMBL" id="AJ438339">
    <property type="protein sequence ID" value="CAD27359.1"/>
    <property type="molecule type" value="Genomic_DNA"/>
</dbReference>
<dbReference type="EMBL" id="CP002038">
    <property type="protein sequence ID" value="ADM97186.1"/>
    <property type="molecule type" value="Genomic_DNA"/>
</dbReference>
<dbReference type="SMR" id="Q8RJP2"/>
<dbReference type="STRING" id="198628.Dda3937_01465"/>
<dbReference type="CAZy" id="PL4">
    <property type="family name" value="Polysaccharide Lyase Family 4"/>
</dbReference>
<dbReference type="KEGG" id="ddd:Dda3937_01465"/>
<dbReference type="eggNOG" id="ENOG502ZAF0">
    <property type="taxonomic scope" value="Bacteria"/>
</dbReference>
<dbReference type="HOGENOM" id="CLU_021767_2_0_6"/>
<dbReference type="BRENDA" id="4.2.2.23">
    <property type="organism ID" value="2141"/>
</dbReference>
<dbReference type="Proteomes" id="UP000006859">
    <property type="component" value="Chromosome"/>
</dbReference>
<dbReference type="GO" id="GO:0005576">
    <property type="term" value="C:extracellular region"/>
    <property type="evidence" value="ECO:0007669"/>
    <property type="project" value="UniProtKB-SubCell"/>
</dbReference>
<dbReference type="GO" id="GO:0030246">
    <property type="term" value="F:carbohydrate binding"/>
    <property type="evidence" value="ECO:0007669"/>
    <property type="project" value="InterPro"/>
</dbReference>
<dbReference type="GO" id="GO:0102210">
    <property type="term" value="F:rhamnogalacturonan endolyase activity"/>
    <property type="evidence" value="ECO:0007669"/>
    <property type="project" value="UniProtKB-EC"/>
</dbReference>
<dbReference type="GO" id="GO:0005975">
    <property type="term" value="P:carbohydrate metabolic process"/>
    <property type="evidence" value="ECO:0007669"/>
    <property type="project" value="InterPro"/>
</dbReference>
<dbReference type="CDD" id="cd10317">
    <property type="entry name" value="RGL4_C"/>
    <property type="match status" value="1"/>
</dbReference>
<dbReference type="CDD" id="cd10316">
    <property type="entry name" value="RGL4_M"/>
    <property type="match status" value="1"/>
</dbReference>
<dbReference type="CDD" id="cd10320">
    <property type="entry name" value="RGL4_N"/>
    <property type="match status" value="1"/>
</dbReference>
<dbReference type="Gene3D" id="2.70.98.10">
    <property type="match status" value="1"/>
</dbReference>
<dbReference type="Gene3D" id="2.60.40.1120">
    <property type="entry name" value="Carboxypeptidase-like, regulatory domain"/>
    <property type="match status" value="1"/>
</dbReference>
<dbReference type="Gene3D" id="2.60.120.260">
    <property type="entry name" value="Galactose-binding domain-like"/>
    <property type="match status" value="1"/>
</dbReference>
<dbReference type="InterPro" id="IPR013784">
    <property type="entry name" value="Carb-bd-like_fold"/>
</dbReference>
<dbReference type="InterPro" id="IPR011013">
    <property type="entry name" value="Gal_mutarotase_sf_dom"/>
</dbReference>
<dbReference type="InterPro" id="IPR008979">
    <property type="entry name" value="Galactose-bd-like_sf"/>
</dbReference>
<dbReference type="InterPro" id="IPR014718">
    <property type="entry name" value="GH-type_carb-bd"/>
</dbReference>
<dbReference type="InterPro" id="IPR051850">
    <property type="entry name" value="Polysacch_Lyase_4"/>
</dbReference>
<dbReference type="InterPro" id="IPR029413">
    <property type="entry name" value="RG-lyase_II"/>
</dbReference>
<dbReference type="InterPro" id="IPR029411">
    <property type="entry name" value="RG-lyase_III"/>
</dbReference>
<dbReference type="PANTHER" id="PTHR32018:SF1">
    <property type="entry name" value="RHAMNOGALACTURONAN ENDOLYASE"/>
    <property type="match status" value="1"/>
</dbReference>
<dbReference type="PANTHER" id="PTHR32018">
    <property type="entry name" value="RHAMNOGALACTURONATE LYASE FAMILY PROTEIN"/>
    <property type="match status" value="1"/>
</dbReference>
<dbReference type="Pfam" id="PF14683">
    <property type="entry name" value="CBM-like"/>
    <property type="match status" value="1"/>
</dbReference>
<dbReference type="Pfam" id="PF14686">
    <property type="entry name" value="fn3_3"/>
    <property type="match status" value="1"/>
</dbReference>
<dbReference type="SUPFAM" id="SSF74650">
    <property type="entry name" value="Galactose mutarotase-like"/>
    <property type="match status" value="1"/>
</dbReference>
<dbReference type="SUPFAM" id="SSF49785">
    <property type="entry name" value="Galactose-binding domain-like"/>
    <property type="match status" value="1"/>
</dbReference>
<dbReference type="SUPFAM" id="SSF49452">
    <property type="entry name" value="Starch-binding domain-like"/>
    <property type="match status" value="1"/>
</dbReference>
<protein>
    <recommendedName>
        <fullName>Rhamnogalacturonate lyase</fullName>
        <shortName>Rhamnogalacturonase</shortName>
        <ecNumber>4.2.2.23</ecNumber>
    </recommendedName>
</protein>
<feature type="signal peptide" evidence="1">
    <location>
        <begin position="1"/>
        <end position="27"/>
    </location>
</feature>
<feature type="chain" id="PRO_0000024914" description="Rhamnogalacturonate lyase">
    <location>
        <begin position="28"/>
        <end position="578"/>
    </location>
</feature>
<name>RHIE_DICD3</name>
<comment type="function">
    <text>Degrades the rhamnogalacturonan I (RG-I) backbone of pectin. Is required for the full virulence of E.chrysanthemi strain 3937 as it is involved in rotting of plant tissue.</text>
</comment>
<comment type="catalytic activity">
    <reaction>
        <text>Endotype eliminative cleavage of L-alpha-rhamnopyranosyl-(1-&gt;4)-alpha-D-galactopyranosyluronic acid bonds of rhamnogalacturonan I domains in ramified hairy regions of pectin leaving L-rhamnopyranose at the reducing end and 4-deoxy-4,5-unsaturated D-galactopyranosyluronic acid at the non-reducing end.</text>
        <dbReference type="EC" id="4.2.2.23"/>
    </reaction>
</comment>
<comment type="biophysicochemical properties">
    <phDependence>
        <text>Optimum pH is 6.0.</text>
    </phDependence>
</comment>
<comment type="subcellular location">
    <subcellularLocation>
        <location>Secreted</location>
    </subcellularLocation>
    <text>Via the type II out secretion pathway.</text>
</comment>
<comment type="induction">
    <text>By rhamnose.</text>
</comment>
<comment type="miscellaneous">
    <text>Contrary to other proteins secreted by the Out pathway, RhiE contains no disulfide bond.</text>
</comment>
<comment type="similarity">
    <text evidence="2">Belongs to the polysaccharide lyase 4 family.</text>
</comment>
<comment type="caution">
    <text evidence="2">Both Met-1 and Met-3 seem to be able to act as initiation codons.</text>
</comment>